<reference key="1">
    <citation type="journal article" date="2007" name="Nature">
        <title>The medaka draft genome and insights into vertebrate genome evolution.</title>
        <authorList>
            <person name="Kasahara M."/>
            <person name="Naruse K."/>
            <person name="Sasaki S."/>
            <person name="Nakatani Y."/>
            <person name="Qu W."/>
            <person name="Ahsan B."/>
            <person name="Yamada T."/>
            <person name="Nagayasu Y."/>
            <person name="Doi K."/>
            <person name="Kasai Y."/>
            <person name="Jindo T."/>
            <person name="Kobayashi D."/>
            <person name="Shimada A."/>
            <person name="Toyoda A."/>
            <person name="Kuroki Y."/>
            <person name="Fujiyama A."/>
            <person name="Sasaki T."/>
            <person name="Shimizu A."/>
            <person name="Asakawa S."/>
            <person name="Shimizu N."/>
            <person name="Hashimoto S."/>
            <person name="Yang J."/>
            <person name="Lee Y."/>
            <person name="Matsushima K."/>
            <person name="Sugano S."/>
            <person name="Sakaizumi M."/>
            <person name="Narita T."/>
            <person name="Ohishi K."/>
            <person name="Haga S."/>
            <person name="Ohta F."/>
            <person name="Nomoto H."/>
            <person name="Nogata K."/>
            <person name="Morishita T."/>
            <person name="Endo T."/>
            <person name="Shin-I T."/>
            <person name="Takeda H."/>
            <person name="Morishita S."/>
            <person name="Kohara Y."/>
        </authorList>
    </citation>
    <scope>NUCLEOTIDE SEQUENCE [LARGE SCALE GENOMIC DNA]</scope>
    <source>
        <strain>Hd-rR</strain>
    </source>
</reference>
<reference key="2">
    <citation type="journal article" date="2008" name="Dev. Growth Differ.">
        <title>Mutation in the abcb7 gene causes abnormal iron and fatty acid metabolism in developing medaka fish.</title>
        <authorList>
            <person name="Miyake A."/>
            <person name="Higashijima S."/>
            <person name="Kobayashi D."/>
            <person name="Narita T."/>
            <person name="Jindo T."/>
            <person name="Setiamarga D.H."/>
            <person name="Ohisa S."/>
            <person name="Orihara N."/>
            <person name="Hibiya K."/>
            <person name="Konno S."/>
            <person name="Sakaguchi S."/>
            <person name="Horie K."/>
            <person name="Imai Y."/>
            <person name="Naruse K."/>
            <person name="Kudo A."/>
            <person name="Takeda H."/>
        </authorList>
    </citation>
    <scope>MUTAGENESIS OF VAL-222</scope>
    <scope>SUBCELLULAR LOCATION</scope>
    <scope>FUNCTION</scope>
</reference>
<dbReference type="RefSeq" id="XP_004073395.1">
    <property type="nucleotide sequence ID" value="XM_004073347.4"/>
</dbReference>
<dbReference type="SMR" id="H2LNR5"/>
<dbReference type="FunCoup" id="H2LNR5">
    <property type="interactions" value="874"/>
</dbReference>
<dbReference type="STRING" id="8090.ENSORLP00000007694"/>
<dbReference type="Ensembl" id="ENSORLT00000007695.2">
    <property type="protein sequence ID" value="ENSORLP00000007694.2"/>
    <property type="gene ID" value="ENSORLG00000006120.2"/>
</dbReference>
<dbReference type="GeneID" id="101168300"/>
<dbReference type="KEGG" id="ola:101168300"/>
<dbReference type="CTD" id="22"/>
<dbReference type="eggNOG" id="KOG0057">
    <property type="taxonomic scope" value="Eukaryota"/>
</dbReference>
<dbReference type="GeneTree" id="ENSGT00940000156281"/>
<dbReference type="HOGENOM" id="CLU_000604_84_1_1"/>
<dbReference type="InParanoid" id="H2LNR5"/>
<dbReference type="OrthoDB" id="6500128at2759"/>
<dbReference type="TreeFam" id="TF105195"/>
<dbReference type="Proteomes" id="UP000001038">
    <property type="component" value="Chromosome 10"/>
</dbReference>
<dbReference type="Proteomes" id="UP000265180">
    <property type="component" value="Unplaced"/>
</dbReference>
<dbReference type="Proteomes" id="UP000265200">
    <property type="component" value="Unplaced"/>
</dbReference>
<dbReference type="GO" id="GO:0005743">
    <property type="term" value="C:mitochondrial inner membrane"/>
    <property type="evidence" value="ECO:0000318"/>
    <property type="project" value="GO_Central"/>
</dbReference>
<dbReference type="GO" id="GO:0005739">
    <property type="term" value="C:mitochondrion"/>
    <property type="evidence" value="ECO:0000314"/>
    <property type="project" value="UniProtKB"/>
</dbReference>
<dbReference type="GO" id="GO:0140481">
    <property type="term" value="F:ABC-type iron-sulfur cluster transporter activity"/>
    <property type="evidence" value="ECO:0000250"/>
    <property type="project" value="UniProtKB"/>
</dbReference>
<dbReference type="GO" id="GO:0005524">
    <property type="term" value="F:ATP binding"/>
    <property type="evidence" value="ECO:0007669"/>
    <property type="project" value="UniProtKB-KW"/>
</dbReference>
<dbReference type="GO" id="GO:0016887">
    <property type="term" value="F:ATP hydrolysis activity"/>
    <property type="evidence" value="ECO:0007669"/>
    <property type="project" value="InterPro"/>
</dbReference>
<dbReference type="GO" id="GO:0042626">
    <property type="term" value="F:ATPase-coupled transmembrane transporter activity"/>
    <property type="evidence" value="ECO:0000318"/>
    <property type="project" value="GO_Central"/>
</dbReference>
<dbReference type="GO" id="GO:1990748">
    <property type="term" value="P:cellular detoxification"/>
    <property type="evidence" value="ECO:0007669"/>
    <property type="project" value="Ensembl"/>
</dbReference>
<dbReference type="GO" id="GO:0010312">
    <property type="term" value="P:detoxification of zinc ion"/>
    <property type="evidence" value="ECO:0007669"/>
    <property type="project" value="Ensembl"/>
</dbReference>
<dbReference type="GO" id="GO:0006879">
    <property type="term" value="P:intracellular iron ion homeostasis"/>
    <property type="evidence" value="ECO:0000315"/>
    <property type="project" value="UniProtKB"/>
</dbReference>
<dbReference type="GO" id="GO:0016226">
    <property type="term" value="P:iron-sulfur cluster assembly"/>
    <property type="evidence" value="ECO:0000250"/>
    <property type="project" value="UniProtKB"/>
</dbReference>
<dbReference type="GO" id="GO:0140466">
    <property type="term" value="P:iron-sulfur cluster export from the mitochondrion"/>
    <property type="evidence" value="ECO:0000250"/>
    <property type="project" value="UniProtKB"/>
</dbReference>
<dbReference type="GO" id="GO:1903427">
    <property type="term" value="P:negative regulation of reactive oxygen species biosynthetic process"/>
    <property type="evidence" value="ECO:0000250"/>
    <property type="project" value="UniProtKB"/>
</dbReference>
<dbReference type="GO" id="GO:0070455">
    <property type="term" value="P:positive regulation of heme biosynthetic process"/>
    <property type="evidence" value="ECO:0000250"/>
    <property type="project" value="UniProtKB"/>
</dbReference>
<dbReference type="GO" id="GO:0055085">
    <property type="term" value="P:transmembrane transport"/>
    <property type="evidence" value="ECO:0000318"/>
    <property type="project" value="GO_Central"/>
</dbReference>
<dbReference type="CDD" id="cd18582">
    <property type="entry name" value="ABC_6TM_ATM1_ABCB7"/>
    <property type="match status" value="1"/>
</dbReference>
<dbReference type="CDD" id="cd03253">
    <property type="entry name" value="ABCC_ATM1_transporter"/>
    <property type="match status" value="1"/>
</dbReference>
<dbReference type="FunFam" id="1.20.1560.10:FF:000004">
    <property type="entry name" value="ATP-binding cassette sub-family B member 7"/>
    <property type="match status" value="1"/>
</dbReference>
<dbReference type="FunFam" id="3.40.50.300:FF:000186">
    <property type="entry name" value="ATP-binding cassette sub-family B member 7, mitochondrial"/>
    <property type="match status" value="1"/>
</dbReference>
<dbReference type="Gene3D" id="1.20.1560.10">
    <property type="entry name" value="ABC transporter type 1, transmembrane domain"/>
    <property type="match status" value="1"/>
</dbReference>
<dbReference type="Gene3D" id="3.40.50.300">
    <property type="entry name" value="P-loop containing nucleotide triphosphate hydrolases"/>
    <property type="match status" value="1"/>
</dbReference>
<dbReference type="InterPro" id="IPR003593">
    <property type="entry name" value="AAA+_ATPase"/>
</dbReference>
<dbReference type="InterPro" id="IPR011527">
    <property type="entry name" value="ABC1_TM_dom"/>
</dbReference>
<dbReference type="InterPro" id="IPR036640">
    <property type="entry name" value="ABC1_TM_sf"/>
</dbReference>
<dbReference type="InterPro" id="IPR003439">
    <property type="entry name" value="ABC_transporter-like_ATP-bd"/>
</dbReference>
<dbReference type="InterPro" id="IPR017871">
    <property type="entry name" value="ABC_transporter-like_CS"/>
</dbReference>
<dbReference type="InterPro" id="IPR027417">
    <property type="entry name" value="P-loop_NTPase"/>
</dbReference>
<dbReference type="InterPro" id="IPR039421">
    <property type="entry name" value="Type_1_exporter"/>
</dbReference>
<dbReference type="PANTHER" id="PTHR24221">
    <property type="entry name" value="ATP-BINDING CASSETTE SUB-FAMILY B"/>
    <property type="match status" value="1"/>
</dbReference>
<dbReference type="PANTHER" id="PTHR24221:SF402">
    <property type="entry name" value="IRON-SULFUR CLUSTERS TRANSPORTER ABCB7, MITOCHONDRIAL"/>
    <property type="match status" value="1"/>
</dbReference>
<dbReference type="Pfam" id="PF00664">
    <property type="entry name" value="ABC_membrane"/>
    <property type="match status" value="1"/>
</dbReference>
<dbReference type="Pfam" id="PF00005">
    <property type="entry name" value="ABC_tran"/>
    <property type="match status" value="1"/>
</dbReference>
<dbReference type="SMART" id="SM00382">
    <property type="entry name" value="AAA"/>
    <property type="match status" value="1"/>
</dbReference>
<dbReference type="SUPFAM" id="SSF90123">
    <property type="entry name" value="ABC transporter transmembrane region"/>
    <property type="match status" value="1"/>
</dbReference>
<dbReference type="SUPFAM" id="SSF52540">
    <property type="entry name" value="P-loop containing nucleoside triphosphate hydrolases"/>
    <property type="match status" value="1"/>
</dbReference>
<dbReference type="PROSITE" id="PS50929">
    <property type="entry name" value="ABC_TM1F"/>
    <property type="match status" value="1"/>
</dbReference>
<dbReference type="PROSITE" id="PS00211">
    <property type="entry name" value="ABC_TRANSPORTER_1"/>
    <property type="match status" value="1"/>
</dbReference>
<dbReference type="PROSITE" id="PS50893">
    <property type="entry name" value="ABC_TRANSPORTER_2"/>
    <property type="match status" value="1"/>
</dbReference>
<gene>
    <name evidence="1" type="primary">abcb7</name>
</gene>
<feature type="transit peptide" description="Mitochondrion" evidence="5">
    <location>
        <begin position="1"/>
        <end position="19"/>
    </location>
</feature>
<feature type="chain" id="PRO_0000452975" description="Iron-sulfur clusters transporter ABCB7, mitochondrial">
    <location>
        <begin position="20"/>
        <end position="746"/>
    </location>
</feature>
<feature type="topological domain" description="Mitochondrial matrix" evidence="2">
    <location>
        <begin position="20"/>
        <end position="133"/>
    </location>
</feature>
<feature type="transmembrane region" description="Helical" evidence="5 7">
    <location>
        <begin position="134"/>
        <end position="154"/>
    </location>
</feature>
<feature type="topological domain" description="Mitochondrial intermembrane" evidence="2">
    <location>
        <begin position="155"/>
        <end position="176"/>
    </location>
</feature>
<feature type="transmembrane region" description="Helical" evidence="5 7">
    <location>
        <begin position="177"/>
        <end position="199"/>
    </location>
</feature>
<feature type="topological domain" description="Mitochondrial matrix" evidence="2">
    <location>
        <begin position="200"/>
        <end position="252"/>
    </location>
</feature>
<feature type="transmembrane region" description="Helical" evidence="5 7">
    <location>
        <begin position="253"/>
        <end position="273"/>
    </location>
</feature>
<feature type="topological domain" description="Mitochondrial intermembrane" evidence="2">
    <location>
        <begin position="274"/>
        <end position="283"/>
    </location>
</feature>
<feature type="transmembrane region" description="Helical" evidence="5 7">
    <location>
        <begin position="284"/>
        <end position="304"/>
    </location>
</feature>
<feature type="topological domain" description="Mitochondrial matrix" evidence="2">
    <location>
        <begin position="305"/>
        <end position="375"/>
    </location>
</feature>
<feature type="transmembrane region" description="Helical" evidence="5 7">
    <location>
        <begin position="376"/>
        <end position="396"/>
    </location>
</feature>
<feature type="topological domain" description="Mitochondrial intermembrane" evidence="2">
    <location>
        <begin position="397"/>
        <end position="402"/>
    </location>
</feature>
<feature type="transmembrane region" description="Helical" evidence="5 7">
    <location>
        <begin position="403"/>
        <end position="423"/>
    </location>
</feature>
<feature type="topological domain" description="Mitochondrial matrix" evidence="2">
    <location>
        <begin position="424"/>
        <end position="746"/>
    </location>
</feature>
<feature type="domain" description="ABC transmembrane type-1" evidence="7">
    <location>
        <begin position="133"/>
        <end position="429"/>
    </location>
</feature>
<feature type="domain" description="ABC transporter" evidence="6">
    <location>
        <begin position="465"/>
        <end position="699"/>
    </location>
</feature>
<feature type="region of interest" description="Disordered" evidence="8">
    <location>
        <begin position="708"/>
        <end position="728"/>
    </location>
</feature>
<feature type="binding site" evidence="2">
    <location>
        <begin position="308"/>
        <end position="312"/>
    </location>
    <ligand>
        <name>glutathione</name>
        <dbReference type="ChEBI" id="CHEBI:57925"/>
    </ligand>
</feature>
<feature type="binding site" evidence="2">
    <location>
        <begin position="371"/>
        <end position="374"/>
    </location>
    <ligand>
        <name>glutathione</name>
        <dbReference type="ChEBI" id="CHEBI:57925"/>
    </ligand>
</feature>
<feature type="binding site" evidence="3">
    <location>
        <position position="421"/>
    </location>
    <ligand>
        <name>glutathione</name>
        <dbReference type="ChEBI" id="CHEBI:57925"/>
    </ligand>
</feature>
<feature type="binding site" evidence="4">
    <location>
        <position position="474"/>
    </location>
    <ligand>
        <name>ATP</name>
        <dbReference type="ChEBI" id="CHEBI:30616"/>
    </ligand>
</feature>
<feature type="binding site" evidence="6">
    <location>
        <begin position="498"/>
        <end position="505"/>
    </location>
    <ligand>
        <name>ATP</name>
        <dbReference type="ChEBI" id="CHEBI:30616"/>
    </ligand>
</feature>
<feature type="mutagenesis site" description="In namako (nmk) mutant. Nmk homozygous mutants exhibit steatosis and die several days after hatching. The liver of nmk mutant develops normally until the hatching stage (10 dpf) but by 2 dph, it exhibits a deformed morphology and loss of transparency. Hepatic cells are haphazardly arranged and contain a lot of vacuoles where neutral lipids are abnormally accumulated. Furthermore, mitochondoria in mutant livers tend to be enlarged and swollen." evidence="9">
    <original>V</original>
    <variation>D</variation>
    <location>
        <position position="222"/>
    </location>
</feature>
<protein>
    <recommendedName>
        <fullName evidence="1">Iron-sulfur clusters transporter ABCB7, mitochondrial</fullName>
    </recommendedName>
    <alternativeName>
        <fullName evidence="1">ATP-binding cassette sub-family B member 7, mitochondrial</fullName>
    </alternativeName>
</protein>
<organism>
    <name type="scientific">Oryzias latipes</name>
    <name type="common">Japanese rice fish</name>
    <name type="synonym">Japanese killifish</name>
    <dbReference type="NCBI Taxonomy" id="8090"/>
    <lineage>
        <taxon>Eukaryota</taxon>
        <taxon>Metazoa</taxon>
        <taxon>Chordata</taxon>
        <taxon>Craniata</taxon>
        <taxon>Vertebrata</taxon>
        <taxon>Euteleostomi</taxon>
        <taxon>Actinopterygii</taxon>
        <taxon>Neopterygii</taxon>
        <taxon>Teleostei</taxon>
        <taxon>Neoteleostei</taxon>
        <taxon>Acanthomorphata</taxon>
        <taxon>Ovalentaria</taxon>
        <taxon>Atherinomorphae</taxon>
        <taxon>Beloniformes</taxon>
        <taxon>Adrianichthyidae</taxon>
        <taxon>Oryziinae</taxon>
        <taxon>Oryzias</taxon>
    </lineage>
</organism>
<proteinExistence type="evidence at protein level"/>
<comment type="function">
    <text evidence="1 9">Exports glutathione-coordinated iron-sulfur clusters such as [2Fe-2S]-(GS)4 cluster from the mitochondria to the cytosol in an ATP-dependent manner allowing the assembly of the cytosolic iron-sulfur (Fe/S) cluster-containing proteins and participates in iron homeostasis (By similarity). May play a role in iron and lipid metabolism (PubMed:19046159).</text>
</comment>
<comment type="catalytic activity">
    <reaction evidence="1">
        <text>(glutathione)4[2Fe(III)-2S] cluster(in) + ATP + H2O = (glutathione)4[2Fe(III)-2S] cluster(out) + ADP + phosphate + H(+)</text>
        <dbReference type="Rhea" id="RHEA:67028"/>
        <dbReference type="ChEBI" id="CHEBI:15377"/>
        <dbReference type="ChEBI" id="CHEBI:15378"/>
        <dbReference type="ChEBI" id="CHEBI:30616"/>
        <dbReference type="ChEBI" id="CHEBI:43474"/>
        <dbReference type="ChEBI" id="CHEBI:167627"/>
        <dbReference type="ChEBI" id="CHEBI:456216"/>
    </reaction>
    <physiologicalReaction direction="left-to-right" evidence="1">
        <dbReference type="Rhea" id="RHEA:67029"/>
    </physiologicalReaction>
</comment>
<comment type="subunit">
    <text evidence="1">Homodimer.</text>
</comment>
<comment type="subcellular location">
    <subcellularLocation>
        <location evidence="2">Mitochondrion inner membrane</location>
        <topology evidence="2">Multi-pass membrane protein</topology>
    </subcellularLocation>
    <subcellularLocation>
        <location evidence="9">Mitochondrion</location>
    </subcellularLocation>
</comment>
<comment type="similarity">
    <text evidence="10">Belongs to the ABC transporter superfamily. ABCB family. Heavy Metal importer (TC 3.A.1.210) subfamily.</text>
</comment>
<evidence type="ECO:0000250" key="1">
    <source>
        <dbReference type="UniProtKB" id="O75027"/>
    </source>
</evidence>
<evidence type="ECO:0000250" key="2">
    <source>
        <dbReference type="UniProtKB" id="P40416"/>
    </source>
</evidence>
<evidence type="ECO:0000250" key="3">
    <source>
        <dbReference type="UniProtKB" id="Q2G506"/>
    </source>
</evidence>
<evidence type="ECO:0000250" key="4">
    <source>
        <dbReference type="UniProtKB" id="Q9NP58"/>
    </source>
</evidence>
<evidence type="ECO:0000255" key="5"/>
<evidence type="ECO:0000255" key="6">
    <source>
        <dbReference type="PROSITE-ProRule" id="PRU00434"/>
    </source>
</evidence>
<evidence type="ECO:0000255" key="7">
    <source>
        <dbReference type="PROSITE-ProRule" id="PRU00441"/>
    </source>
</evidence>
<evidence type="ECO:0000256" key="8">
    <source>
        <dbReference type="SAM" id="MobiDB-lite"/>
    </source>
</evidence>
<evidence type="ECO:0000269" key="9">
    <source>
    </source>
</evidence>
<evidence type="ECO:0000305" key="10"/>
<keyword id="KW-0067">ATP-binding</keyword>
<keyword id="KW-0472">Membrane</keyword>
<keyword id="KW-0496">Mitochondrion</keyword>
<keyword id="KW-0999">Mitochondrion inner membrane</keyword>
<keyword id="KW-0547">Nucleotide-binding</keyword>
<keyword id="KW-1185">Reference proteome</keyword>
<keyword id="KW-0809">Transit peptide</keyword>
<keyword id="KW-0812">Transmembrane</keyword>
<keyword id="KW-1133">Transmembrane helix</keyword>
<keyword id="KW-0813">Transport</keyword>
<accession>H2LNR5</accession>
<sequence>MAPMLVSLNCGIRVQRRTLTLLIRQTSSYHIWDKSCINNGTNYQRRRTYALNSLHPQRTASWSTNRTENRRQILEAAKHLQVTDKRTCWHGNAGGRLNADPKNVLKEVHSAKILSAMLSYVWPKDRPDLRARVAVSLGLLAGAKLTNVMVPFMFKYAVDELNQMSGHMLNLNDAPSTVATMTTAVLIGYGVSRAGSALFNELRNTVFGKVAQSSIRRIAKNVFLHLHNLDLGFHLSRQTGALSKAIDRGTRGISFVLSALVFNLGPTVFEMFLVSAILYYKCGGEFAAVALGTLSAYTIFTILVTQWRTRFRIEMNKADNEAGNAAIDSLLNYETVKYFNNEKYEAERYDGYLKLYESSSLKTTSTLAMLNFGQSAIFSVGLTAIMLLASKGIAAGNMTVGDLVMVNGLLFQLSLPLNFLGTVYRETRQALIDMNTLFTLLNVDTKIKEKDLAPPLAVTPQDATIRFEDVYFEYMEGQKVLNGVSFEVPAGKKVAIVGGSGSGKSTIVRLLFRFYEPQQGNIYISGQNIRDVSLESLRKALGVVPQDAVLFHNNIFYNLQYGNINATPEEVYQVARLAGLHDAILRMPHGYDTQVGERGLKLSGGEKQRVAIARAILKNPPILLYDEATSSLDSITEENIMTSMKEMVKDRTSVFIAHRLSTIVDADEILVLSQGKVAERGTHQALLDTPGSLYAELWNAQNSKILNSRKSSSAPAAERLSQKEEERKKLQEEILNSVKGCGNCSC</sequence>
<name>ABCB7_ORYLA</name>